<keyword id="KW-1015">Disulfide bond</keyword>
<keyword id="KW-0964">Secreted</keyword>
<keyword id="KW-0732">Signal</keyword>
<keyword id="KW-0800">Toxin</keyword>
<protein>
    <recommendedName>
        <fullName evidence="2">U-scoloptoxin(04)-Sm2a</fullName>
        <shortName evidence="2">U-SLPTX(04)-Sm2a</shortName>
    </recommendedName>
</protein>
<accession>P0DPX3</accession>
<reference key="1">
    <citation type="journal article" date="2014" name="Mol. Biol. Evol.">
        <title>Clawing through evolution: toxin diversification and convergence in the ancient lineage Chilopoda (centipedes).</title>
        <authorList>
            <person name="Undheim E.A."/>
            <person name="Jones A."/>
            <person name="Clauser K.R."/>
            <person name="Holland J.W."/>
            <person name="Pineda S.S."/>
            <person name="King G.F."/>
            <person name="Fry B.G."/>
        </authorList>
    </citation>
    <scope>NUCLEOTIDE SEQUENCE [MRNA]</scope>
    <scope>NOMENCLATURE</scope>
    <source>
        <tissue>Venom gland</tissue>
    </source>
</reference>
<proteinExistence type="inferred from homology"/>
<dbReference type="SMR" id="P0DPX3"/>
<dbReference type="GO" id="GO:0005576">
    <property type="term" value="C:extracellular region"/>
    <property type="evidence" value="ECO:0007669"/>
    <property type="project" value="UniProtKB-SubCell"/>
</dbReference>
<dbReference type="GO" id="GO:0090729">
    <property type="term" value="F:toxin activity"/>
    <property type="evidence" value="ECO:0007669"/>
    <property type="project" value="UniProtKB-KW"/>
</dbReference>
<sequence length="66" mass="7509">MKAIYILSVLLLMMLPILSRFATSEGAAQHVEPIQKIRVEQNDCTRGIRCPRGHYCDPGLRQCLPR</sequence>
<comment type="subcellular location">
    <subcellularLocation>
        <location evidence="4">Secreted</location>
    </subcellularLocation>
</comment>
<comment type="tissue specificity">
    <text evidence="4">Expressed by the venom gland.</text>
</comment>
<comment type="PTM">
    <text evidence="3">Contains 2 disulfide bonds.</text>
</comment>
<comment type="similarity">
    <text evidence="3">Belongs to the scoloptoxin-04 family.</text>
</comment>
<comment type="caution">
    <text evidence="4">All S.morsitans family members described in 'Undeheim et al., 2014' have not been imported into UniProtKB. Please, refer to this paper to access them.</text>
</comment>
<comment type="online information" name="National Center for Biotechnology Information (NCBI)">
    <link uri="https://www.ncbi.nlm.nih.gov/nuccore/GASH01000177"/>
</comment>
<organism>
    <name type="scientific">Scolopendra morsitans</name>
    <name type="common">Tanzanian blue ringleg centipede</name>
    <dbReference type="NCBI Taxonomy" id="943129"/>
    <lineage>
        <taxon>Eukaryota</taxon>
        <taxon>Metazoa</taxon>
        <taxon>Ecdysozoa</taxon>
        <taxon>Arthropoda</taxon>
        <taxon>Myriapoda</taxon>
        <taxon>Chilopoda</taxon>
        <taxon>Pleurostigmophora</taxon>
        <taxon>Scolopendromorpha</taxon>
        <taxon>Scolopendridae</taxon>
        <taxon>Scolopendra</taxon>
    </lineage>
</organism>
<evidence type="ECO:0000255" key="1"/>
<evidence type="ECO:0000303" key="2">
    <source>
    </source>
</evidence>
<evidence type="ECO:0000305" key="3"/>
<evidence type="ECO:0000305" key="4">
    <source>
    </source>
</evidence>
<name>TX42A_SCOMO</name>
<feature type="signal peptide" evidence="1">
    <location>
        <begin position="1"/>
        <end position="19"/>
    </location>
</feature>
<feature type="chain" id="PRO_0000446715" description="U-scoloptoxin(04)-Sm2a" evidence="3">
    <location>
        <begin position="20"/>
        <end position="66"/>
    </location>
</feature>